<evidence type="ECO:0000255" key="1">
    <source>
        <dbReference type="PROSITE-ProRule" id="PRU00540"/>
    </source>
</evidence>
<evidence type="ECO:0007829" key="2">
    <source>
        <dbReference type="PDB" id="1XD7"/>
    </source>
</evidence>
<name>YWNA_BACSU</name>
<reference key="1">
    <citation type="journal article" date="1997" name="J. Bacteriol.">
        <title>The Bacillus subtilis ureABC operon.</title>
        <authorList>
            <person name="Cruz-Ramos H."/>
            <person name="Glaser P."/>
            <person name="Wray L.V. Jr."/>
            <person name="Fisher S.H."/>
        </authorList>
    </citation>
    <scope>NUCLEOTIDE SEQUENCE [GENOMIC DNA]</scope>
    <source>
        <strain>168</strain>
    </source>
</reference>
<reference key="2">
    <citation type="journal article" date="1997" name="Nature">
        <title>The complete genome sequence of the Gram-positive bacterium Bacillus subtilis.</title>
        <authorList>
            <person name="Kunst F."/>
            <person name="Ogasawara N."/>
            <person name="Moszer I."/>
            <person name="Albertini A.M."/>
            <person name="Alloni G."/>
            <person name="Azevedo V."/>
            <person name="Bertero M.G."/>
            <person name="Bessieres P."/>
            <person name="Bolotin A."/>
            <person name="Borchert S."/>
            <person name="Borriss R."/>
            <person name="Boursier L."/>
            <person name="Brans A."/>
            <person name="Braun M."/>
            <person name="Brignell S.C."/>
            <person name="Bron S."/>
            <person name="Brouillet S."/>
            <person name="Bruschi C.V."/>
            <person name="Caldwell B."/>
            <person name="Capuano V."/>
            <person name="Carter N.M."/>
            <person name="Choi S.-K."/>
            <person name="Codani J.-J."/>
            <person name="Connerton I.F."/>
            <person name="Cummings N.J."/>
            <person name="Daniel R.A."/>
            <person name="Denizot F."/>
            <person name="Devine K.M."/>
            <person name="Duesterhoeft A."/>
            <person name="Ehrlich S.D."/>
            <person name="Emmerson P.T."/>
            <person name="Entian K.-D."/>
            <person name="Errington J."/>
            <person name="Fabret C."/>
            <person name="Ferrari E."/>
            <person name="Foulger D."/>
            <person name="Fritz C."/>
            <person name="Fujita M."/>
            <person name="Fujita Y."/>
            <person name="Fuma S."/>
            <person name="Galizzi A."/>
            <person name="Galleron N."/>
            <person name="Ghim S.-Y."/>
            <person name="Glaser P."/>
            <person name="Goffeau A."/>
            <person name="Golightly E.J."/>
            <person name="Grandi G."/>
            <person name="Guiseppi G."/>
            <person name="Guy B.J."/>
            <person name="Haga K."/>
            <person name="Haiech J."/>
            <person name="Harwood C.R."/>
            <person name="Henaut A."/>
            <person name="Hilbert H."/>
            <person name="Holsappel S."/>
            <person name="Hosono S."/>
            <person name="Hullo M.-F."/>
            <person name="Itaya M."/>
            <person name="Jones L.-M."/>
            <person name="Joris B."/>
            <person name="Karamata D."/>
            <person name="Kasahara Y."/>
            <person name="Klaerr-Blanchard M."/>
            <person name="Klein C."/>
            <person name="Kobayashi Y."/>
            <person name="Koetter P."/>
            <person name="Koningstein G."/>
            <person name="Krogh S."/>
            <person name="Kumano M."/>
            <person name="Kurita K."/>
            <person name="Lapidus A."/>
            <person name="Lardinois S."/>
            <person name="Lauber J."/>
            <person name="Lazarevic V."/>
            <person name="Lee S.-M."/>
            <person name="Levine A."/>
            <person name="Liu H."/>
            <person name="Masuda S."/>
            <person name="Mauel C."/>
            <person name="Medigue C."/>
            <person name="Medina N."/>
            <person name="Mellado R.P."/>
            <person name="Mizuno M."/>
            <person name="Moestl D."/>
            <person name="Nakai S."/>
            <person name="Noback M."/>
            <person name="Noone D."/>
            <person name="O'Reilly M."/>
            <person name="Ogawa K."/>
            <person name="Ogiwara A."/>
            <person name="Oudega B."/>
            <person name="Park S.-H."/>
            <person name="Parro V."/>
            <person name="Pohl T.M."/>
            <person name="Portetelle D."/>
            <person name="Porwollik S."/>
            <person name="Prescott A.M."/>
            <person name="Presecan E."/>
            <person name="Pujic P."/>
            <person name="Purnelle B."/>
            <person name="Rapoport G."/>
            <person name="Rey M."/>
            <person name="Reynolds S."/>
            <person name="Rieger M."/>
            <person name="Rivolta C."/>
            <person name="Rocha E."/>
            <person name="Roche B."/>
            <person name="Rose M."/>
            <person name="Sadaie Y."/>
            <person name="Sato T."/>
            <person name="Scanlan E."/>
            <person name="Schleich S."/>
            <person name="Schroeter R."/>
            <person name="Scoffone F."/>
            <person name="Sekiguchi J."/>
            <person name="Sekowska A."/>
            <person name="Seror S.J."/>
            <person name="Serror P."/>
            <person name="Shin B.-S."/>
            <person name="Soldo B."/>
            <person name="Sorokin A."/>
            <person name="Tacconi E."/>
            <person name="Takagi T."/>
            <person name="Takahashi H."/>
            <person name="Takemaru K."/>
            <person name="Takeuchi M."/>
            <person name="Tamakoshi A."/>
            <person name="Tanaka T."/>
            <person name="Terpstra P."/>
            <person name="Tognoni A."/>
            <person name="Tosato V."/>
            <person name="Uchiyama S."/>
            <person name="Vandenbol M."/>
            <person name="Vannier F."/>
            <person name="Vassarotti A."/>
            <person name="Viari A."/>
            <person name="Wambutt R."/>
            <person name="Wedler E."/>
            <person name="Wedler H."/>
            <person name="Weitzenegger T."/>
            <person name="Winters P."/>
            <person name="Wipat A."/>
            <person name="Yamamoto H."/>
            <person name="Yamane K."/>
            <person name="Yasumoto K."/>
            <person name="Yata K."/>
            <person name="Yoshida K."/>
            <person name="Yoshikawa H.-F."/>
            <person name="Zumstein E."/>
            <person name="Yoshikawa H."/>
            <person name="Danchin A."/>
        </authorList>
    </citation>
    <scope>NUCLEOTIDE SEQUENCE [LARGE SCALE GENOMIC DNA]</scope>
    <source>
        <strain>168</strain>
    </source>
</reference>
<reference key="3">
    <citation type="submission" date="2005-01" db="PDB data bank">
        <title>Crystal structure of a putative DNA binding protein.</title>
        <authorList>
            <consortium name="New York structural genomix research consortium (NYSGXRC)"/>
        </authorList>
    </citation>
    <scope>X-RAY CRYSTALLOGRAPHY (2.3 ANGSTROMS)</scope>
</reference>
<gene>
    <name type="primary">ywnA</name>
    <name type="ordered locus">BSU36630</name>
</gene>
<organism>
    <name type="scientific">Bacillus subtilis (strain 168)</name>
    <dbReference type="NCBI Taxonomy" id="224308"/>
    <lineage>
        <taxon>Bacteria</taxon>
        <taxon>Bacillati</taxon>
        <taxon>Bacillota</taxon>
        <taxon>Bacilli</taxon>
        <taxon>Bacillales</taxon>
        <taxon>Bacillaceae</taxon>
        <taxon>Bacillus</taxon>
    </lineage>
</organism>
<protein>
    <recommendedName>
        <fullName>Putative HTH-type transcriptional regulator YwnA</fullName>
    </recommendedName>
</protein>
<proteinExistence type="evidence at protein level"/>
<keyword id="KW-0002">3D-structure</keyword>
<keyword id="KW-0238">DNA-binding</keyword>
<keyword id="KW-1185">Reference proteome</keyword>
<keyword id="KW-0804">Transcription</keyword>
<keyword id="KW-0805">Transcription regulation</keyword>
<feature type="chain" id="PRO_0000360420" description="Putative HTH-type transcriptional regulator YwnA">
    <location>
        <begin position="1"/>
        <end position="133"/>
    </location>
</feature>
<feature type="domain" description="HTH rrf2-type" evidence="1">
    <location>
        <begin position="1"/>
        <end position="130"/>
    </location>
</feature>
<feature type="DNA-binding region" description="H-T-H motif" evidence="1">
    <location>
        <begin position="24"/>
        <end position="47"/>
    </location>
</feature>
<feature type="helix" evidence="2">
    <location>
        <begin position="5"/>
        <end position="17"/>
    </location>
</feature>
<feature type="helix" evidence="2">
    <location>
        <begin position="24"/>
        <end position="31"/>
    </location>
</feature>
<feature type="helix" evidence="2">
    <location>
        <begin position="35"/>
        <end position="47"/>
    </location>
</feature>
<feature type="strand" evidence="2">
    <location>
        <begin position="50"/>
        <end position="52"/>
    </location>
</feature>
<feature type="strand" evidence="2">
    <location>
        <begin position="55"/>
        <end position="59"/>
    </location>
</feature>
<feature type="strand" evidence="2">
    <location>
        <begin position="61"/>
        <end position="64"/>
    </location>
</feature>
<feature type="helix" evidence="2">
    <location>
        <begin position="71"/>
        <end position="78"/>
    </location>
</feature>
<feature type="helix" evidence="2">
    <location>
        <begin position="96"/>
        <end position="120"/>
    </location>
</feature>
<feature type="helix" evidence="2">
    <location>
        <begin position="125"/>
        <end position="128"/>
    </location>
</feature>
<sequence length="133" mass="14711">MINSRLAVAIHILSLISMDEKTSSEIIADSVNTNPVVVRRMISLLKKADILTSRAGVPGASLKKDPADISLLEVYRAVQKQEELFAVHENPNPKCPVGKKIQNALDETFESVQRAMENELASKSLKDVMNHLF</sequence>
<dbReference type="EMBL" id="Y08559">
    <property type="protein sequence ID" value="CAA69860.1"/>
    <property type="molecule type" value="Genomic_DNA"/>
</dbReference>
<dbReference type="EMBL" id="AL009126">
    <property type="protein sequence ID" value="CAB15680.1"/>
    <property type="molecule type" value="Genomic_DNA"/>
</dbReference>
<dbReference type="PIR" id="D70063">
    <property type="entry name" value="D70063"/>
</dbReference>
<dbReference type="RefSeq" id="NP_391544.1">
    <property type="nucleotide sequence ID" value="NC_000964.3"/>
</dbReference>
<dbReference type="RefSeq" id="WP_003227734.1">
    <property type="nucleotide sequence ID" value="NZ_OZ025638.1"/>
</dbReference>
<dbReference type="PDB" id="1XD7">
    <property type="method" value="X-ray"/>
    <property type="resolution" value="2.30 A"/>
    <property type="chains" value="A=2-133"/>
</dbReference>
<dbReference type="PDBsum" id="1XD7"/>
<dbReference type="SMR" id="P71036"/>
<dbReference type="FunCoup" id="P71036">
    <property type="interactions" value="16"/>
</dbReference>
<dbReference type="STRING" id="224308.BSU36630"/>
<dbReference type="PaxDb" id="224308-BSU36630"/>
<dbReference type="DNASU" id="936952"/>
<dbReference type="EnsemblBacteria" id="CAB15680">
    <property type="protein sequence ID" value="CAB15680"/>
    <property type="gene ID" value="BSU_36630"/>
</dbReference>
<dbReference type="GeneID" id="936952"/>
<dbReference type="KEGG" id="bsu:BSU36630"/>
<dbReference type="PATRIC" id="fig|224308.179.peg.3964"/>
<dbReference type="eggNOG" id="COG1959">
    <property type="taxonomic scope" value="Bacteria"/>
</dbReference>
<dbReference type="InParanoid" id="P71036"/>
<dbReference type="OrthoDB" id="213028at2"/>
<dbReference type="PhylomeDB" id="P71036"/>
<dbReference type="BioCyc" id="BSUB:BSU36630-MONOMER"/>
<dbReference type="EvolutionaryTrace" id="P71036"/>
<dbReference type="Proteomes" id="UP000001570">
    <property type="component" value="Chromosome"/>
</dbReference>
<dbReference type="GO" id="GO:0005829">
    <property type="term" value="C:cytosol"/>
    <property type="evidence" value="ECO:0000318"/>
    <property type="project" value="GO_Central"/>
</dbReference>
<dbReference type="GO" id="GO:0003677">
    <property type="term" value="F:DNA binding"/>
    <property type="evidence" value="ECO:0007669"/>
    <property type="project" value="UniProtKB-KW"/>
</dbReference>
<dbReference type="GO" id="GO:0003700">
    <property type="term" value="F:DNA-binding transcription factor activity"/>
    <property type="evidence" value="ECO:0000318"/>
    <property type="project" value="GO_Central"/>
</dbReference>
<dbReference type="GO" id="GO:0006355">
    <property type="term" value="P:regulation of DNA-templated transcription"/>
    <property type="evidence" value="ECO:0000318"/>
    <property type="project" value="GO_Central"/>
</dbReference>
<dbReference type="FunFam" id="1.10.10.10:FF:000138">
    <property type="entry name" value="Rrf2 family transcriptional regulator"/>
    <property type="match status" value="1"/>
</dbReference>
<dbReference type="Gene3D" id="1.10.10.10">
    <property type="entry name" value="Winged helix-like DNA-binding domain superfamily/Winged helix DNA-binding domain"/>
    <property type="match status" value="1"/>
</dbReference>
<dbReference type="InterPro" id="IPR000944">
    <property type="entry name" value="Tscrpt_reg_Rrf2"/>
</dbReference>
<dbReference type="InterPro" id="IPR036388">
    <property type="entry name" value="WH-like_DNA-bd_sf"/>
</dbReference>
<dbReference type="InterPro" id="IPR036390">
    <property type="entry name" value="WH_DNA-bd_sf"/>
</dbReference>
<dbReference type="PANTHER" id="PTHR33221:SF15">
    <property type="entry name" value="HTH-TYPE TRANSCRIPTIONAL REGULATOR YWGB-RELATED"/>
    <property type="match status" value="1"/>
</dbReference>
<dbReference type="PANTHER" id="PTHR33221">
    <property type="entry name" value="WINGED HELIX-TURN-HELIX TRANSCRIPTIONAL REGULATOR, RRF2 FAMILY"/>
    <property type="match status" value="1"/>
</dbReference>
<dbReference type="Pfam" id="PF02082">
    <property type="entry name" value="Rrf2"/>
    <property type="match status" value="1"/>
</dbReference>
<dbReference type="SUPFAM" id="SSF46785">
    <property type="entry name" value="Winged helix' DNA-binding domain"/>
    <property type="match status" value="1"/>
</dbReference>
<dbReference type="PROSITE" id="PS51197">
    <property type="entry name" value="HTH_RRF2_2"/>
    <property type="match status" value="1"/>
</dbReference>
<accession>P71036</accession>
<accession>Q794Z7</accession>